<dbReference type="EC" id="4.2.3.5" evidence="1"/>
<dbReference type="EMBL" id="AP006840">
    <property type="protein sequence ID" value="BAD40935.1"/>
    <property type="molecule type" value="Genomic_DNA"/>
</dbReference>
<dbReference type="SMR" id="Q67N08"/>
<dbReference type="STRING" id="292459.STH1950"/>
<dbReference type="KEGG" id="sth:STH1950"/>
<dbReference type="eggNOG" id="COG0082">
    <property type="taxonomic scope" value="Bacteria"/>
</dbReference>
<dbReference type="HOGENOM" id="CLU_034547_2_0_9"/>
<dbReference type="OrthoDB" id="9771806at2"/>
<dbReference type="UniPathway" id="UPA00053">
    <property type="reaction ID" value="UER00090"/>
</dbReference>
<dbReference type="Proteomes" id="UP000000417">
    <property type="component" value="Chromosome"/>
</dbReference>
<dbReference type="GO" id="GO:0005829">
    <property type="term" value="C:cytosol"/>
    <property type="evidence" value="ECO:0007669"/>
    <property type="project" value="TreeGrafter"/>
</dbReference>
<dbReference type="GO" id="GO:0004107">
    <property type="term" value="F:chorismate synthase activity"/>
    <property type="evidence" value="ECO:0007669"/>
    <property type="project" value="UniProtKB-UniRule"/>
</dbReference>
<dbReference type="GO" id="GO:0010181">
    <property type="term" value="F:FMN binding"/>
    <property type="evidence" value="ECO:0007669"/>
    <property type="project" value="TreeGrafter"/>
</dbReference>
<dbReference type="GO" id="GO:0008652">
    <property type="term" value="P:amino acid biosynthetic process"/>
    <property type="evidence" value="ECO:0007669"/>
    <property type="project" value="UniProtKB-KW"/>
</dbReference>
<dbReference type="GO" id="GO:0009073">
    <property type="term" value="P:aromatic amino acid family biosynthetic process"/>
    <property type="evidence" value="ECO:0007669"/>
    <property type="project" value="UniProtKB-KW"/>
</dbReference>
<dbReference type="GO" id="GO:0009423">
    <property type="term" value="P:chorismate biosynthetic process"/>
    <property type="evidence" value="ECO:0007669"/>
    <property type="project" value="UniProtKB-UniRule"/>
</dbReference>
<dbReference type="CDD" id="cd07304">
    <property type="entry name" value="Chorismate_synthase"/>
    <property type="match status" value="1"/>
</dbReference>
<dbReference type="FunFam" id="3.60.150.10:FF:000002">
    <property type="entry name" value="Chorismate synthase"/>
    <property type="match status" value="1"/>
</dbReference>
<dbReference type="Gene3D" id="3.60.150.10">
    <property type="entry name" value="Chorismate synthase AroC"/>
    <property type="match status" value="1"/>
</dbReference>
<dbReference type="HAMAP" id="MF_00300">
    <property type="entry name" value="Chorismate_synth"/>
    <property type="match status" value="1"/>
</dbReference>
<dbReference type="InterPro" id="IPR000453">
    <property type="entry name" value="Chorismate_synth"/>
</dbReference>
<dbReference type="InterPro" id="IPR035904">
    <property type="entry name" value="Chorismate_synth_AroC_sf"/>
</dbReference>
<dbReference type="InterPro" id="IPR020541">
    <property type="entry name" value="Chorismate_synthase_CS"/>
</dbReference>
<dbReference type="NCBIfam" id="TIGR00033">
    <property type="entry name" value="aroC"/>
    <property type="match status" value="1"/>
</dbReference>
<dbReference type="NCBIfam" id="NF003793">
    <property type="entry name" value="PRK05382.1"/>
    <property type="match status" value="1"/>
</dbReference>
<dbReference type="PANTHER" id="PTHR21085">
    <property type="entry name" value="CHORISMATE SYNTHASE"/>
    <property type="match status" value="1"/>
</dbReference>
<dbReference type="PANTHER" id="PTHR21085:SF0">
    <property type="entry name" value="CHORISMATE SYNTHASE"/>
    <property type="match status" value="1"/>
</dbReference>
<dbReference type="Pfam" id="PF01264">
    <property type="entry name" value="Chorismate_synt"/>
    <property type="match status" value="1"/>
</dbReference>
<dbReference type="PIRSF" id="PIRSF001456">
    <property type="entry name" value="Chorismate_synth"/>
    <property type="match status" value="1"/>
</dbReference>
<dbReference type="SUPFAM" id="SSF103263">
    <property type="entry name" value="Chorismate synthase, AroC"/>
    <property type="match status" value="1"/>
</dbReference>
<dbReference type="PROSITE" id="PS00787">
    <property type="entry name" value="CHORISMATE_SYNTHASE_1"/>
    <property type="match status" value="1"/>
</dbReference>
<dbReference type="PROSITE" id="PS00788">
    <property type="entry name" value="CHORISMATE_SYNTHASE_2"/>
    <property type="match status" value="1"/>
</dbReference>
<dbReference type="PROSITE" id="PS00789">
    <property type="entry name" value="CHORISMATE_SYNTHASE_3"/>
    <property type="match status" value="1"/>
</dbReference>
<reference key="1">
    <citation type="journal article" date="2004" name="Nucleic Acids Res.">
        <title>Genome sequence of Symbiobacterium thermophilum, an uncultivable bacterium that depends on microbial commensalism.</title>
        <authorList>
            <person name="Ueda K."/>
            <person name="Yamashita A."/>
            <person name="Ishikawa J."/>
            <person name="Shimada M."/>
            <person name="Watsuji T."/>
            <person name="Morimura K."/>
            <person name="Ikeda H."/>
            <person name="Hattori M."/>
            <person name="Beppu T."/>
        </authorList>
    </citation>
    <scope>NUCLEOTIDE SEQUENCE [LARGE SCALE GENOMIC DNA]</scope>
    <source>
        <strain>DSM 24528 / JCM 14929 / IAM 14863 / T</strain>
    </source>
</reference>
<name>AROC_SYMTH</name>
<organism>
    <name type="scientific">Symbiobacterium thermophilum (strain DSM 24528 / JCM 14929 / IAM 14863 / T)</name>
    <dbReference type="NCBI Taxonomy" id="292459"/>
    <lineage>
        <taxon>Bacteria</taxon>
        <taxon>Bacillati</taxon>
        <taxon>Bacillota</taxon>
        <taxon>Clostridia</taxon>
        <taxon>Eubacteriales</taxon>
        <taxon>Symbiobacteriaceae</taxon>
        <taxon>Symbiobacterium</taxon>
    </lineage>
</organism>
<accession>Q67N08</accession>
<comment type="function">
    <text evidence="1">Catalyzes the anti-1,4-elimination of the C-3 phosphate and the C-6 proR hydrogen from 5-enolpyruvylshikimate-3-phosphate (EPSP) to yield chorismate, which is the branch point compound that serves as the starting substrate for the three terminal pathways of aromatic amino acid biosynthesis. This reaction introduces a second double bond into the aromatic ring system.</text>
</comment>
<comment type="catalytic activity">
    <reaction evidence="1">
        <text>5-O-(1-carboxyvinyl)-3-phosphoshikimate = chorismate + phosphate</text>
        <dbReference type="Rhea" id="RHEA:21020"/>
        <dbReference type="ChEBI" id="CHEBI:29748"/>
        <dbReference type="ChEBI" id="CHEBI:43474"/>
        <dbReference type="ChEBI" id="CHEBI:57701"/>
        <dbReference type="EC" id="4.2.3.5"/>
    </reaction>
</comment>
<comment type="cofactor">
    <cofactor evidence="1">
        <name>FMNH2</name>
        <dbReference type="ChEBI" id="CHEBI:57618"/>
    </cofactor>
    <text evidence="1">Reduced FMN (FMNH(2)).</text>
</comment>
<comment type="pathway">
    <text evidence="1">Metabolic intermediate biosynthesis; chorismate biosynthesis; chorismate from D-erythrose 4-phosphate and phosphoenolpyruvate: step 7/7.</text>
</comment>
<comment type="subunit">
    <text evidence="1">Homotetramer.</text>
</comment>
<comment type="similarity">
    <text evidence="1">Belongs to the chorismate synthase family.</text>
</comment>
<feature type="chain" id="PRO_0000140663" description="Chorismate synthase">
    <location>
        <begin position="1"/>
        <end position="391"/>
    </location>
</feature>
<feature type="binding site" evidence="1">
    <location>
        <position position="39"/>
    </location>
    <ligand>
        <name>NADP(+)</name>
        <dbReference type="ChEBI" id="CHEBI:58349"/>
    </ligand>
</feature>
<feature type="binding site" evidence="1">
    <location>
        <position position="45"/>
    </location>
    <ligand>
        <name>NADP(+)</name>
        <dbReference type="ChEBI" id="CHEBI:58349"/>
    </ligand>
</feature>
<feature type="binding site" evidence="1">
    <location>
        <begin position="133"/>
        <end position="135"/>
    </location>
    <ligand>
        <name>FMN</name>
        <dbReference type="ChEBI" id="CHEBI:58210"/>
    </ligand>
</feature>
<feature type="binding site" evidence="1">
    <location>
        <begin position="254"/>
        <end position="255"/>
    </location>
    <ligand>
        <name>FMN</name>
        <dbReference type="ChEBI" id="CHEBI:58210"/>
    </ligand>
</feature>
<feature type="binding site" evidence="1">
    <location>
        <position position="299"/>
    </location>
    <ligand>
        <name>FMN</name>
        <dbReference type="ChEBI" id="CHEBI:58210"/>
    </ligand>
</feature>
<feature type="binding site" evidence="1">
    <location>
        <begin position="314"/>
        <end position="318"/>
    </location>
    <ligand>
        <name>FMN</name>
        <dbReference type="ChEBI" id="CHEBI:58210"/>
    </ligand>
</feature>
<feature type="binding site" evidence="1">
    <location>
        <position position="340"/>
    </location>
    <ligand>
        <name>FMN</name>
        <dbReference type="ChEBI" id="CHEBI:58210"/>
    </ligand>
</feature>
<keyword id="KW-0028">Amino-acid biosynthesis</keyword>
<keyword id="KW-0057">Aromatic amino acid biosynthesis</keyword>
<keyword id="KW-0274">FAD</keyword>
<keyword id="KW-0285">Flavoprotein</keyword>
<keyword id="KW-0288">FMN</keyword>
<keyword id="KW-0456">Lyase</keyword>
<keyword id="KW-0521">NADP</keyword>
<keyword id="KW-1185">Reference proteome</keyword>
<evidence type="ECO:0000255" key="1">
    <source>
        <dbReference type="HAMAP-Rule" id="MF_00300"/>
    </source>
</evidence>
<sequence>MRYLTAGESHGRALVTIVEGLPAGVPVDLAAIDRDLARRQSGYGRGGRMKIEQDRVQVLSGIRHGKTLGSPVALLVENRDWLNWTEVMSPAPLEAYTDPRAAQKVRTRPRPGHADLAGALKYDHADLRNVLERASARETAARVAAGSLAKQYLAPFGIRVAGYVRSIGPVEAQPPAGLDLDGIVARAEASPVRCPDPAASARMVEEIDAAKRDGDSLGGVVEVVAAGLPPGLGSHVHWDRKLDGALGAALLSIQAAKGVEIGDGFLGARRRGSEVHDEIGWSPDRGYFRYTNRAGGLEGGMTNGMDLVVRVAFKPIATLYKPLRSVEIDTHVEAAAGIERSDVCAVPAAAVIAECVTAFELARFVAEKFGGDSLEEALRNFRGYLEQIARR</sequence>
<proteinExistence type="inferred from homology"/>
<protein>
    <recommendedName>
        <fullName evidence="1">Chorismate synthase</fullName>
        <shortName evidence="1">CS</shortName>
        <ecNumber evidence="1">4.2.3.5</ecNumber>
    </recommendedName>
    <alternativeName>
        <fullName evidence="1">5-enolpyruvylshikimate-3-phosphate phospholyase</fullName>
    </alternativeName>
</protein>
<gene>
    <name evidence="1" type="primary">aroC</name>
    <name type="ordered locus">STH1950</name>
</gene>